<sequence length="343" mass="37038">MLVLGIESTCDETACAIVRDGKDILSNIVASQIDLHKEYGGVVPELACRRHIDLIIPVIDQALNQAKLTLEQIDLIAVANGPGLIGALLIGLNTAKALALALRKPFIGINHVEAHLYAAIMSHPQDFQFPCLGVVLSGGHTALVLIKQIGQYELIGQTVDDAVGEAFDKVAKMLNLPYPGGPEIENLARHGRSVKFNFKAGQVKGRPLDFSFSGLKTAVLYAIKDPKALKEMVLLSSEMTQDIAASFQEAACSDIVKKSLLAAKQYGVNTLLFGGGVTNNCYLRKLFSVANSNLNYIWPSAGLSLDNAAMIAGLGYYRYQLQNKSDSMDLEPLTRTPLQSVKE</sequence>
<comment type="function">
    <text evidence="1">Required for the formation of a threonylcarbamoyl group on adenosine at position 37 (t(6)A37) in tRNAs that read codons beginning with adenine. Is involved in the transfer of the threonylcarbamoyl moiety of threonylcarbamoyl-AMP (TC-AMP) to the N6 group of A37, together with TsaE and TsaB. TsaD likely plays a direct catalytic role in this reaction.</text>
</comment>
<comment type="catalytic activity">
    <reaction evidence="1">
        <text>L-threonylcarbamoyladenylate + adenosine(37) in tRNA = N(6)-L-threonylcarbamoyladenosine(37) in tRNA + AMP + H(+)</text>
        <dbReference type="Rhea" id="RHEA:37059"/>
        <dbReference type="Rhea" id="RHEA-COMP:10162"/>
        <dbReference type="Rhea" id="RHEA-COMP:10163"/>
        <dbReference type="ChEBI" id="CHEBI:15378"/>
        <dbReference type="ChEBI" id="CHEBI:73682"/>
        <dbReference type="ChEBI" id="CHEBI:74411"/>
        <dbReference type="ChEBI" id="CHEBI:74418"/>
        <dbReference type="ChEBI" id="CHEBI:456215"/>
        <dbReference type="EC" id="2.3.1.234"/>
    </reaction>
</comment>
<comment type="cofactor">
    <cofactor evidence="1">
        <name>Fe(2+)</name>
        <dbReference type="ChEBI" id="CHEBI:29033"/>
    </cofactor>
    <text evidence="1">Binds 1 Fe(2+) ion per subunit.</text>
</comment>
<comment type="subcellular location">
    <subcellularLocation>
        <location evidence="1">Cytoplasm</location>
    </subcellularLocation>
</comment>
<comment type="similarity">
    <text evidence="1">Belongs to the KAE1 / TsaD family.</text>
</comment>
<dbReference type="EC" id="2.3.1.234" evidence="1"/>
<dbReference type="EMBL" id="BX908798">
    <property type="protein sequence ID" value="CAF23542.1"/>
    <property type="molecule type" value="Genomic_DNA"/>
</dbReference>
<dbReference type="RefSeq" id="WP_011175368.1">
    <property type="nucleotide sequence ID" value="NC_005861.2"/>
</dbReference>
<dbReference type="SMR" id="Q6MD07"/>
<dbReference type="STRING" id="264201.pc0818"/>
<dbReference type="KEGG" id="pcu:PC_RS03930"/>
<dbReference type="eggNOG" id="COG0533">
    <property type="taxonomic scope" value="Bacteria"/>
</dbReference>
<dbReference type="HOGENOM" id="CLU_023208_0_2_0"/>
<dbReference type="OrthoDB" id="9806197at2"/>
<dbReference type="Proteomes" id="UP000000529">
    <property type="component" value="Chromosome"/>
</dbReference>
<dbReference type="GO" id="GO:0005737">
    <property type="term" value="C:cytoplasm"/>
    <property type="evidence" value="ECO:0007669"/>
    <property type="project" value="UniProtKB-SubCell"/>
</dbReference>
<dbReference type="GO" id="GO:0005506">
    <property type="term" value="F:iron ion binding"/>
    <property type="evidence" value="ECO:0007669"/>
    <property type="project" value="UniProtKB-UniRule"/>
</dbReference>
<dbReference type="GO" id="GO:0061711">
    <property type="term" value="F:N(6)-L-threonylcarbamoyladenine synthase activity"/>
    <property type="evidence" value="ECO:0007669"/>
    <property type="project" value="UniProtKB-EC"/>
</dbReference>
<dbReference type="GO" id="GO:0002949">
    <property type="term" value="P:tRNA threonylcarbamoyladenosine modification"/>
    <property type="evidence" value="ECO:0007669"/>
    <property type="project" value="UniProtKB-UniRule"/>
</dbReference>
<dbReference type="CDD" id="cd24133">
    <property type="entry name" value="ASKHA_NBD_TsaD_bac"/>
    <property type="match status" value="1"/>
</dbReference>
<dbReference type="FunFam" id="3.30.420.40:FF:000012">
    <property type="entry name" value="tRNA N6-adenosine threonylcarbamoyltransferase"/>
    <property type="match status" value="1"/>
</dbReference>
<dbReference type="Gene3D" id="3.30.420.40">
    <property type="match status" value="2"/>
</dbReference>
<dbReference type="HAMAP" id="MF_01445">
    <property type="entry name" value="TsaD"/>
    <property type="match status" value="1"/>
</dbReference>
<dbReference type="InterPro" id="IPR043129">
    <property type="entry name" value="ATPase_NBD"/>
</dbReference>
<dbReference type="InterPro" id="IPR000905">
    <property type="entry name" value="Gcp-like_dom"/>
</dbReference>
<dbReference type="InterPro" id="IPR017861">
    <property type="entry name" value="KAE1/TsaD"/>
</dbReference>
<dbReference type="InterPro" id="IPR017860">
    <property type="entry name" value="Peptidase_M22_CS"/>
</dbReference>
<dbReference type="InterPro" id="IPR022450">
    <property type="entry name" value="TsaD"/>
</dbReference>
<dbReference type="NCBIfam" id="TIGR00329">
    <property type="entry name" value="gcp_kae1"/>
    <property type="match status" value="1"/>
</dbReference>
<dbReference type="NCBIfam" id="TIGR03723">
    <property type="entry name" value="T6A_TsaD_YgjD"/>
    <property type="match status" value="1"/>
</dbReference>
<dbReference type="PANTHER" id="PTHR11735">
    <property type="entry name" value="TRNA N6-ADENOSINE THREONYLCARBAMOYLTRANSFERASE"/>
    <property type="match status" value="1"/>
</dbReference>
<dbReference type="PANTHER" id="PTHR11735:SF6">
    <property type="entry name" value="TRNA N6-ADENOSINE THREONYLCARBAMOYLTRANSFERASE, MITOCHONDRIAL"/>
    <property type="match status" value="1"/>
</dbReference>
<dbReference type="Pfam" id="PF00814">
    <property type="entry name" value="TsaD"/>
    <property type="match status" value="1"/>
</dbReference>
<dbReference type="PRINTS" id="PR00789">
    <property type="entry name" value="OSIALOPTASE"/>
</dbReference>
<dbReference type="SUPFAM" id="SSF53067">
    <property type="entry name" value="Actin-like ATPase domain"/>
    <property type="match status" value="2"/>
</dbReference>
<dbReference type="PROSITE" id="PS01016">
    <property type="entry name" value="GLYCOPROTEASE"/>
    <property type="match status" value="1"/>
</dbReference>
<feature type="chain" id="PRO_0000303488" description="tRNA N6-adenosine threonylcarbamoyltransferase">
    <location>
        <begin position="1"/>
        <end position="343"/>
    </location>
</feature>
<feature type="binding site" evidence="1">
    <location>
        <position position="111"/>
    </location>
    <ligand>
        <name>Fe cation</name>
        <dbReference type="ChEBI" id="CHEBI:24875"/>
    </ligand>
</feature>
<feature type="binding site" evidence="1">
    <location>
        <position position="115"/>
    </location>
    <ligand>
        <name>Fe cation</name>
        <dbReference type="ChEBI" id="CHEBI:24875"/>
    </ligand>
</feature>
<feature type="binding site" evidence="1">
    <location>
        <begin position="135"/>
        <end position="139"/>
    </location>
    <ligand>
        <name>substrate</name>
    </ligand>
</feature>
<feature type="binding site" evidence="1">
    <location>
        <position position="168"/>
    </location>
    <ligand>
        <name>substrate</name>
    </ligand>
</feature>
<feature type="binding site" evidence="1">
    <location>
        <position position="181"/>
    </location>
    <ligand>
        <name>substrate</name>
    </ligand>
</feature>
<feature type="binding site" evidence="1">
    <location>
        <position position="280"/>
    </location>
    <ligand>
        <name>substrate</name>
    </ligand>
</feature>
<feature type="binding site" evidence="1">
    <location>
        <position position="306"/>
    </location>
    <ligand>
        <name>Fe cation</name>
        <dbReference type="ChEBI" id="CHEBI:24875"/>
    </ligand>
</feature>
<proteinExistence type="inferred from homology"/>
<evidence type="ECO:0000255" key="1">
    <source>
        <dbReference type="HAMAP-Rule" id="MF_01445"/>
    </source>
</evidence>
<organism>
    <name type="scientific">Protochlamydia amoebophila (strain UWE25)</name>
    <dbReference type="NCBI Taxonomy" id="264201"/>
    <lineage>
        <taxon>Bacteria</taxon>
        <taxon>Pseudomonadati</taxon>
        <taxon>Chlamydiota</taxon>
        <taxon>Chlamydiia</taxon>
        <taxon>Parachlamydiales</taxon>
        <taxon>Parachlamydiaceae</taxon>
        <taxon>Candidatus Protochlamydia</taxon>
    </lineage>
</organism>
<protein>
    <recommendedName>
        <fullName evidence="1">tRNA N6-adenosine threonylcarbamoyltransferase</fullName>
        <ecNumber evidence="1">2.3.1.234</ecNumber>
    </recommendedName>
    <alternativeName>
        <fullName evidence="1">N6-L-threonylcarbamoyladenine synthase</fullName>
        <shortName evidence="1">t(6)A synthase</shortName>
    </alternativeName>
    <alternativeName>
        <fullName evidence="1">t(6)A37 threonylcarbamoyladenosine biosynthesis protein TsaD</fullName>
    </alternativeName>
    <alternativeName>
        <fullName evidence="1">tRNA threonylcarbamoyladenosine biosynthesis protein TsaD</fullName>
    </alternativeName>
</protein>
<keyword id="KW-0012">Acyltransferase</keyword>
<keyword id="KW-0963">Cytoplasm</keyword>
<keyword id="KW-0408">Iron</keyword>
<keyword id="KW-0479">Metal-binding</keyword>
<keyword id="KW-1185">Reference proteome</keyword>
<keyword id="KW-0808">Transferase</keyword>
<keyword id="KW-0819">tRNA processing</keyword>
<accession>Q6MD07</accession>
<name>TSAD_PARUW</name>
<gene>
    <name evidence="1" type="primary">tsaD</name>
    <name type="synonym">gcp</name>
    <name type="ordered locus">pc0818</name>
</gene>
<reference key="1">
    <citation type="journal article" date="2004" name="Science">
        <title>Illuminating the evolutionary history of chlamydiae.</title>
        <authorList>
            <person name="Horn M."/>
            <person name="Collingro A."/>
            <person name="Schmitz-Esser S."/>
            <person name="Beier C.L."/>
            <person name="Purkhold U."/>
            <person name="Fartmann B."/>
            <person name="Brandt P."/>
            <person name="Nyakatura G.J."/>
            <person name="Droege M."/>
            <person name="Frishman D."/>
            <person name="Rattei T."/>
            <person name="Mewes H.-W."/>
            <person name="Wagner M."/>
        </authorList>
    </citation>
    <scope>NUCLEOTIDE SEQUENCE [LARGE SCALE GENOMIC DNA]</scope>
    <source>
        <strain>UWE25</strain>
    </source>
</reference>